<protein>
    <recommendedName>
        <fullName>Core protein p15</fullName>
    </recommendedName>
</protein>
<accession>P03339</accession>
<gene>
    <name type="primary">gag</name>
</gene>
<organism>
    <name type="scientific">Feline sarcoma virus (strain Gardner-Rasheed)</name>
    <dbReference type="NCBI Taxonomy" id="11775"/>
    <lineage>
        <taxon>Viruses</taxon>
        <taxon>Riboviria</taxon>
        <taxon>Pararnavirae</taxon>
        <taxon>Artverviricota</taxon>
        <taxon>Revtraviricetes</taxon>
        <taxon>Ortervirales</taxon>
        <taxon>Retroviridae</taxon>
        <taxon>Orthoretrovirinae</taxon>
        <taxon>Gammaretrovirus</taxon>
        <taxon>Feline leukemia virus</taxon>
    </lineage>
</organism>
<name>GAG_FSVGR</name>
<keyword id="KW-0449">Lipoprotein</keyword>
<keyword id="KW-0519">Myristate</keyword>
<keyword id="KW-0946">Virion</keyword>
<comment type="subcellular location">
    <subcellularLocation>
        <location evidence="3">Virion</location>
    </subcellularLocation>
</comment>
<comment type="PTM">
    <text>Specific enzymatic cleavages in vivo yield mature proteins.</text>
</comment>
<comment type="miscellaneous">
    <text>This protein is synthesized as a Gag-Fgr polyprotein.</text>
</comment>
<organismHost>
    <name type="scientific">Felidae</name>
    <name type="common">cat family</name>
    <dbReference type="NCBI Taxonomy" id="9681"/>
</organismHost>
<evidence type="ECO:0000250" key="1"/>
<evidence type="ECO:0000256" key="2">
    <source>
        <dbReference type="SAM" id="MobiDB-lite"/>
    </source>
</evidence>
<evidence type="ECO:0000305" key="3"/>
<sequence length="118" mass="13418">MGQTITTPLSLTLDHWSEVRARAHNQGVEVRKKKWITLCEAEWVMMNVGWPREGTFSLDNISQVEKKIFAPGPYGHPDQVPYITTWRSLATDPPSWVRPFLPPPKPPTSLPQPHSPQP</sequence>
<dbReference type="EMBL" id="X00255">
    <property type="protein sequence ID" value="CAA25063.1"/>
    <property type="status" value="ALT_TERM"/>
    <property type="molecule type" value="Genomic_DNA"/>
</dbReference>
<dbReference type="SMR" id="P03339"/>
<dbReference type="GO" id="GO:0044423">
    <property type="term" value="C:virion component"/>
    <property type="evidence" value="ECO:0007669"/>
    <property type="project" value="UniProtKB-KW"/>
</dbReference>
<dbReference type="Gene3D" id="1.10.150.180">
    <property type="entry name" value="Gamma-retroviral matrix domain"/>
    <property type="match status" value="1"/>
</dbReference>
<dbReference type="InterPro" id="IPR000840">
    <property type="entry name" value="G_retro_matrix"/>
</dbReference>
<dbReference type="InterPro" id="IPR036946">
    <property type="entry name" value="G_retro_matrix_sf"/>
</dbReference>
<dbReference type="InterPro" id="IPR050462">
    <property type="entry name" value="Retroviral_Gag-Pol_poly"/>
</dbReference>
<dbReference type="InterPro" id="IPR010999">
    <property type="entry name" value="Retrovr_matrix"/>
</dbReference>
<dbReference type="PANTHER" id="PTHR33166">
    <property type="entry name" value="GAG_P30 DOMAIN-CONTAINING PROTEIN"/>
    <property type="match status" value="1"/>
</dbReference>
<dbReference type="Pfam" id="PF01140">
    <property type="entry name" value="Gag_MA"/>
    <property type="match status" value="1"/>
</dbReference>
<dbReference type="SUPFAM" id="SSF47836">
    <property type="entry name" value="Retroviral matrix proteins"/>
    <property type="match status" value="1"/>
</dbReference>
<reference key="1">
    <citation type="journal article" date="1984" name="Science">
        <title>Gene product of v-fgr onc: hybrid protein containing a portion of actin and a tyrosine-specific protein kinase.</title>
        <authorList>
            <person name="Naharro G."/>
            <person name="Robbins K.C."/>
            <person name="Reddy E.P."/>
        </authorList>
    </citation>
    <scope>NUCLEOTIDE SEQUENCE [GENOMIC DNA]</scope>
</reference>
<feature type="initiator methionine" description="Removed; by host" evidence="1">
    <location>
        <position position="1"/>
    </location>
</feature>
<feature type="chain" id="PRO_0000125478" description="Core protein p15">
    <location>
        <begin position="2"/>
        <end position="118"/>
    </location>
</feature>
<feature type="region of interest" description="Disordered" evidence="2">
    <location>
        <begin position="97"/>
        <end position="118"/>
    </location>
</feature>
<feature type="compositionally biased region" description="Pro residues" evidence="2">
    <location>
        <begin position="100"/>
        <end position="118"/>
    </location>
</feature>
<feature type="lipid moiety-binding region" description="N-myristoyl glycine; by host" evidence="1">
    <location>
        <position position="2"/>
    </location>
</feature>
<proteinExistence type="inferred from homology"/>